<feature type="chain" id="PRO_1000093403" description="Endonuclease MutS2">
    <location>
        <begin position="1"/>
        <end position="777"/>
    </location>
</feature>
<feature type="domain" description="Smr" evidence="1">
    <location>
        <begin position="702"/>
        <end position="777"/>
    </location>
</feature>
<feature type="binding site" evidence="1">
    <location>
        <begin position="328"/>
        <end position="335"/>
    </location>
    <ligand>
        <name>ATP</name>
        <dbReference type="ChEBI" id="CHEBI:30616"/>
    </ligand>
</feature>
<protein>
    <recommendedName>
        <fullName evidence="1">Endonuclease MutS2</fullName>
        <ecNumber evidence="1">3.1.-.-</ecNumber>
    </recommendedName>
    <alternativeName>
        <fullName evidence="1">Ribosome-associated protein quality control-upstream factor</fullName>
        <shortName evidence="1">RQC-upstream factor</shortName>
        <shortName evidence="1">RqcU</shortName>
        <ecNumber evidence="1">3.6.4.-</ecNumber>
    </alternativeName>
</protein>
<proteinExistence type="inferred from homology"/>
<accession>A3CKV4</accession>
<name>MUTS2_STRSV</name>
<comment type="function">
    <text evidence="1">Endonuclease that is involved in the suppression of homologous recombination and thus may have a key role in the control of bacterial genetic diversity.</text>
</comment>
<comment type="function">
    <text evidence="1">Acts as a ribosome collision sensor, splitting the ribosome into its 2 subunits. Detects stalled/collided 70S ribosomes which it binds and splits by an ATP-hydrolysis driven conformational change. Acts upstream of the ribosome quality control system (RQC), a ribosome-associated complex that mediates the extraction of incompletely synthesized nascent chains from stalled ribosomes and their subsequent degradation. Probably generates substrates for RQC.</text>
</comment>
<comment type="subunit">
    <text evidence="1">Homodimer. Binds to stalled ribosomes, contacting rRNA.</text>
</comment>
<comment type="similarity">
    <text evidence="1">Belongs to the DNA mismatch repair MutS family. MutS2 subfamily.</text>
</comment>
<reference key="1">
    <citation type="journal article" date="2007" name="J. Bacteriol.">
        <title>Genome of the opportunistic pathogen Streptococcus sanguinis.</title>
        <authorList>
            <person name="Xu P."/>
            <person name="Alves J.M."/>
            <person name="Kitten T."/>
            <person name="Brown A."/>
            <person name="Chen Z."/>
            <person name="Ozaki L.S."/>
            <person name="Manque P."/>
            <person name="Ge X."/>
            <person name="Serrano M.G."/>
            <person name="Puiu D."/>
            <person name="Hendricks S."/>
            <person name="Wang Y."/>
            <person name="Chaplin M.D."/>
            <person name="Akan D."/>
            <person name="Paik S."/>
            <person name="Peterson D.L."/>
            <person name="Macrina F.L."/>
            <person name="Buck G.A."/>
        </authorList>
    </citation>
    <scope>NUCLEOTIDE SEQUENCE [LARGE SCALE GENOMIC DNA]</scope>
    <source>
        <strain>SK36</strain>
    </source>
</reference>
<sequence length="777" mass="87398">MNTKILETLEFSKIKELFAPYLLTEQGQLELGLLLPTSKKETVVSAFLEMTDMQQIFVQHPHFSLAATQDITALTKRLELESDLNIEEFLALKRVLAVTQELKSFYEDLENVHLEKLDRLFDNLAVFPKLQGSLQAVNDGGFIESFASESLSRIRRKIQENENQVREILQEILKNKGEMLADQVVASRNGRNVLPVKNTYRNRISGVVHDISASGNTVYIEPRAVVNLNEEIASSRADERYEIQRILQELSDLFRPHAAEIANNAWIIGHLDLVRAKVRFMQETGAVVPDLSEEQDIQLLSVRHPLIENAVANDLHFGLDLTEIVITGPNTGGKTIMLKTLGLAQIMAQSGLPILADKGSRVGIFSQIFADIGDEQSIEQSLSTFSSHMTNIVSILEQVDSESLVLLDELGAGTDPQEGAALAIAILEDLRLRQIKTMATTHYPELKAYGIETDWVENASMEFDTDSLRPTYRFMQGVPGRSNAFEIAQRLGLSEVIVGHAQEQTDTDSDVNRIIERLEEQTLESRKRLDNIREVEQENLKFNRALKKLYNEFNREKETELNKARLEAQEIVDLALSESESILKNLHDKSSLKPHEIIEAKAQLKKLAPETVDLSKNKVLKQAKKNRAPKVGDDILVTSYGQRGTLVKQLKDGRWEAQVGLIKMTLEEQEFNLLKAEKEQQPKRKQVNVVKRANTAGPKARLDLRGKRYEEAMEELDAFIDQALLNNMAQVDIIHGIGTGVIREGVTKYLRRNKHVKSFGYAPQNAGGSGATIVIFK</sequence>
<organism>
    <name type="scientific">Streptococcus sanguinis (strain SK36)</name>
    <dbReference type="NCBI Taxonomy" id="388919"/>
    <lineage>
        <taxon>Bacteria</taxon>
        <taxon>Bacillati</taxon>
        <taxon>Bacillota</taxon>
        <taxon>Bacilli</taxon>
        <taxon>Lactobacillales</taxon>
        <taxon>Streptococcaceae</taxon>
        <taxon>Streptococcus</taxon>
    </lineage>
</organism>
<keyword id="KW-0067">ATP-binding</keyword>
<keyword id="KW-0238">DNA-binding</keyword>
<keyword id="KW-0255">Endonuclease</keyword>
<keyword id="KW-0378">Hydrolase</keyword>
<keyword id="KW-0540">Nuclease</keyword>
<keyword id="KW-0547">Nucleotide-binding</keyword>
<keyword id="KW-1185">Reference proteome</keyword>
<keyword id="KW-0694">RNA-binding</keyword>
<keyword id="KW-0699">rRNA-binding</keyword>
<evidence type="ECO:0000255" key="1">
    <source>
        <dbReference type="HAMAP-Rule" id="MF_00092"/>
    </source>
</evidence>
<dbReference type="EC" id="3.1.-.-" evidence="1"/>
<dbReference type="EC" id="3.6.4.-" evidence="1"/>
<dbReference type="EMBL" id="CP000387">
    <property type="protein sequence ID" value="ABN43809.1"/>
    <property type="molecule type" value="Genomic_DNA"/>
</dbReference>
<dbReference type="RefSeq" id="WP_011836455.1">
    <property type="nucleotide sequence ID" value="NC_009009.1"/>
</dbReference>
<dbReference type="RefSeq" id="YP_001034359.1">
    <property type="nucleotide sequence ID" value="NC_009009.1"/>
</dbReference>
<dbReference type="SMR" id="A3CKV4"/>
<dbReference type="STRING" id="388919.SSA_0355"/>
<dbReference type="KEGG" id="ssa:SSA_0355"/>
<dbReference type="PATRIC" id="fig|388919.9.peg.342"/>
<dbReference type="eggNOG" id="COG1193">
    <property type="taxonomic scope" value="Bacteria"/>
</dbReference>
<dbReference type="HOGENOM" id="CLU_011252_2_1_9"/>
<dbReference type="OrthoDB" id="9808166at2"/>
<dbReference type="Proteomes" id="UP000002148">
    <property type="component" value="Chromosome"/>
</dbReference>
<dbReference type="GO" id="GO:0005524">
    <property type="term" value="F:ATP binding"/>
    <property type="evidence" value="ECO:0007669"/>
    <property type="project" value="UniProtKB-UniRule"/>
</dbReference>
<dbReference type="GO" id="GO:0016887">
    <property type="term" value="F:ATP hydrolysis activity"/>
    <property type="evidence" value="ECO:0007669"/>
    <property type="project" value="InterPro"/>
</dbReference>
<dbReference type="GO" id="GO:0140664">
    <property type="term" value="F:ATP-dependent DNA damage sensor activity"/>
    <property type="evidence" value="ECO:0007669"/>
    <property type="project" value="InterPro"/>
</dbReference>
<dbReference type="GO" id="GO:0004519">
    <property type="term" value="F:endonuclease activity"/>
    <property type="evidence" value="ECO:0007669"/>
    <property type="project" value="UniProtKB-UniRule"/>
</dbReference>
<dbReference type="GO" id="GO:0030983">
    <property type="term" value="F:mismatched DNA binding"/>
    <property type="evidence" value="ECO:0007669"/>
    <property type="project" value="InterPro"/>
</dbReference>
<dbReference type="GO" id="GO:0043023">
    <property type="term" value="F:ribosomal large subunit binding"/>
    <property type="evidence" value="ECO:0007669"/>
    <property type="project" value="UniProtKB-UniRule"/>
</dbReference>
<dbReference type="GO" id="GO:0019843">
    <property type="term" value="F:rRNA binding"/>
    <property type="evidence" value="ECO:0007669"/>
    <property type="project" value="UniProtKB-UniRule"/>
</dbReference>
<dbReference type="GO" id="GO:0006298">
    <property type="term" value="P:mismatch repair"/>
    <property type="evidence" value="ECO:0007669"/>
    <property type="project" value="InterPro"/>
</dbReference>
<dbReference type="GO" id="GO:0045910">
    <property type="term" value="P:negative regulation of DNA recombination"/>
    <property type="evidence" value="ECO:0007669"/>
    <property type="project" value="InterPro"/>
</dbReference>
<dbReference type="GO" id="GO:0072344">
    <property type="term" value="P:rescue of stalled ribosome"/>
    <property type="evidence" value="ECO:0007669"/>
    <property type="project" value="UniProtKB-UniRule"/>
</dbReference>
<dbReference type="CDD" id="cd03280">
    <property type="entry name" value="ABC_MutS2"/>
    <property type="match status" value="1"/>
</dbReference>
<dbReference type="FunFam" id="3.40.50.300:FF:000830">
    <property type="entry name" value="Endonuclease MutS2"/>
    <property type="match status" value="1"/>
</dbReference>
<dbReference type="Gene3D" id="3.30.1370.110">
    <property type="match status" value="1"/>
</dbReference>
<dbReference type="Gene3D" id="3.40.50.300">
    <property type="entry name" value="P-loop containing nucleotide triphosphate hydrolases"/>
    <property type="match status" value="1"/>
</dbReference>
<dbReference type="HAMAP" id="MF_00092">
    <property type="entry name" value="MutS2"/>
    <property type="match status" value="1"/>
</dbReference>
<dbReference type="InterPro" id="IPR000432">
    <property type="entry name" value="DNA_mismatch_repair_MutS_C"/>
</dbReference>
<dbReference type="InterPro" id="IPR007696">
    <property type="entry name" value="DNA_mismatch_repair_MutS_core"/>
</dbReference>
<dbReference type="InterPro" id="IPR036187">
    <property type="entry name" value="DNA_mismatch_repair_MutS_sf"/>
</dbReference>
<dbReference type="InterPro" id="IPR046893">
    <property type="entry name" value="MSSS"/>
</dbReference>
<dbReference type="InterPro" id="IPR045076">
    <property type="entry name" value="MutS"/>
</dbReference>
<dbReference type="InterPro" id="IPR005747">
    <property type="entry name" value="MutS2"/>
</dbReference>
<dbReference type="InterPro" id="IPR027417">
    <property type="entry name" value="P-loop_NTPase"/>
</dbReference>
<dbReference type="InterPro" id="IPR002625">
    <property type="entry name" value="Smr_dom"/>
</dbReference>
<dbReference type="InterPro" id="IPR036063">
    <property type="entry name" value="Smr_dom_sf"/>
</dbReference>
<dbReference type="NCBIfam" id="TIGR01069">
    <property type="entry name" value="mutS2"/>
    <property type="match status" value="1"/>
</dbReference>
<dbReference type="PANTHER" id="PTHR48466:SF2">
    <property type="entry name" value="OS10G0509000 PROTEIN"/>
    <property type="match status" value="1"/>
</dbReference>
<dbReference type="PANTHER" id="PTHR48466">
    <property type="entry name" value="OS10G0509000 PROTEIN-RELATED"/>
    <property type="match status" value="1"/>
</dbReference>
<dbReference type="Pfam" id="PF20297">
    <property type="entry name" value="MSSS"/>
    <property type="match status" value="1"/>
</dbReference>
<dbReference type="Pfam" id="PF00488">
    <property type="entry name" value="MutS_V"/>
    <property type="match status" value="1"/>
</dbReference>
<dbReference type="Pfam" id="PF01713">
    <property type="entry name" value="Smr"/>
    <property type="match status" value="1"/>
</dbReference>
<dbReference type="PIRSF" id="PIRSF005814">
    <property type="entry name" value="MutS_YshD"/>
    <property type="match status" value="1"/>
</dbReference>
<dbReference type="SMART" id="SM00534">
    <property type="entry name" value="MUTSac"/>
    <property type="match status" value="1"/>
</dbReference>
<dbReference type="SMART" id="SM00533">
    <property type="entry name" value="MUTSd"/>
    <property type="match status" value="1"/>
</dbReference>
<dbReference type="SMART" id="SM00463">
    <property type="entry name" value="SMR"/>
    <property type="match status" value="1"/>
</dbReference>
<dbReference type="SUPFAM" id="SSF48334">
    <property type="entry name" value="DNA repair protein MutS, domain III"/>
    <property type="match status" value="1"/>
</dbReference>
<dbReference type="SUPFAM" id="SSF52540">
    <property type="entry name" value="P-loop containing nucleoside triphosphate hydrolases"/>
    <property type="match status" value="1"/>
</dbReference>
<dbReference type="SUPFAM" id="SSF160443">
    <property type="entry name" value="SMR domain-like"/>
    <property type="match status" value="1"/>
</dbReference>
<dbReference type="PROSITE" id="PS00486">
    <property type="entry name" value="DNA_MISMATCH_REPAIR_2"/>
    <property type="match status" value="1"/>
</dbReference>
<dbReference type="PROSITE" id="PS50828">
    <property type="entry name" value="SMR"/>
    <property type="match status" value="1"/>
</dbReference>
<gene>
    <name evidence="1" type="primary">mutS2</name>
    <name evidence="1" type="synonym">rqcU</name>
    <name type="ordered locus">SSA_0355</name>
</gene>